<accession>B1LIZ7</accession>
<feature type="chain" id="PRO_1000138696" description="Probable malonic semialdehyde reductase RutE">
    <location>
        <begin position="1"/>
        <end position="196"/>
    </location>
</feature>
<name>RUTE_ECOSM</name>
<evidence type="ECO:0000255" key="1">
    <source>
        <dbReference type="HAMAP-Rule" id="MF_01204"/>
    </source>
</evidence>
<keyword id="KW-0285">Flavoprotein</keyword>
<keyword id="KW-0288">FMN</keyword>
<keyword id="KW-0520">NAD</keyword>
<keyword id="KW-0521">NADP</keyword>
<keyword id="KW-0560">Oxidoreductase</keyword>
<reference key="1">
    <citation type="journal article" date="2008" name="J. Bacteriol.">
        <title>Insights into the environmental resistance gene pool from the genome sequence of the multidrug-resistant environmental isolate Escherichia coli SMS-3-5.</title>
        <authorList>
            <person name="Fricke W.F."/>
            <person name="Wright M.S."/>
            <person name="Lindell A.H."/>
            <person name="Harkins D.M."/>
            <person name="Baker-Austin C."/>
            <person name="Ravel J."/>
            <person name="Stepanauskas R."/>
        </authorList>
    </citation>
    <scope>NUCLEOTIDE SEQUENCE [LARGE SCALE GENOMIC DNA]</scope>
    <source>
        <strain>SMS-3-5 / SECEC</strain>
    </source>
</reference>
<organism>
    <name type="scientific">Escherichia coli (strain SMS-3-5 / SECEC)</name>
    <dbReference type="NCBI Taxonomy" id="439855"/>
    <lineage>
        <taxon>Bacteria</taxon>
        <taxon>Pseudomonadati</taxon>
        <taxon>Pseudomonadota</taxon>
        <taxon>Gammaproteobacteria</taxon>
        <taxon>Enterobacterales</taxon>
        <taxon>Enterobacteriaceae</taxon>
        <taxon>Escherichia</taxon>
    </lineage>
</organism>
<dbReference type="EC" id="1.1.1.298" evidence="1"/>
<dbReference type="EMBL" id="CP000970">
    <property type="protein sequence ID" value="ACB17874.1"/>
    <property type="molecule type" value="Genomic_DNA"/>
</dbReference>
<dbReference type="RefSeq" id="WP_001001181.1">
    <property type="nucleotide sequence ID" value="NC_010498.1"/>
</dbReference>
<dbReference type="SMR" id="B1LIZ7"/>
<dbReference type="KEGG" id="ecm:EcSMS35_2117"/>
<dbReference type="HOGENOM" id="CLU_084441_0_0_6"/>
<dbReference type="Proteomes" id="UP000007011">
    <property type="component" value="Chromosome"/>
</dbReference>
<dbReference type="GO" id="GO:0035527">
    <property type="term" value="F:3-hydroxypropionate dehydrogenase (NADP+) activity"/>
    <property type="evidence" value="ECO:0007669"/>
    <property type="project" value="UniProtKB-UniRule"/>
</dbReference>
<dbReference type="GO" id="GO:0019740">
    <property type="term" value="P:nitrogen utilization"/>
    <property type="evidence" value="ECO:0007669"/>
    <property type="project" value="UniProtKB-UniRule"/>
</dbReference>
<dbReference type="GO" id="GO:0006212">
    <property type="term" value="P:uracil catabolic process"/>
    <property type="evidence" value="ECO:0007669"/>
    <property type="project" value="UniProtKB-UniRule"/>
</dbReference>
<dbReference type="CDD" id="cd02148">
    <property type="entry name" value="RutE-like"/>
    <property type="match status" value="1"/>
</dbReference>
<dbReference type="FunFam" id="3.40.109.10:FF:000003">
    <property type="entry name" value="Probable malonic semialdehyde reductase RutE"/>
    <property type="match status" value="1"/>
</dbReference>
<dbReference type="Gene3D" id="3.40.109.10">
    <property type="entry name" value="NADH Oxidase"/>
    <property type="match status" value="1"/>
</dbReference>
<dbReference type="HAMAP" id="MF_01204">
    <property type="entry name" value="Oxidoreductase_RutE_HadB"/>
    <property type="match status" value="1"/>
</dbReference>
<dbReference type="InterPro" id="IPR029479">
    <property type="entry name" value="Nitroreductase"/>
</dbReference>
<dbReference type="InterPro" id="IPR000415">
    <property type="entry name" value="Nitroreductase-like"/>
</dbReference>
<dbReference type="InterPro" id="IPR050461">
    <property type="entry name" value="Nitroreductase_HadB/RutE"/>
</dbReference>
<dbReference type="InterPro" id="IPR023936">
    <property type="entry name" value="RutE-like"/>
</dbReference>
<dbReference type="NCBIfam" id="NF003768">
    <property type="entry name" value="PRK05365.1"/>
    <property type="match status" value="1"/>
</dbReference>
<dbReference type="PANTHER" id="PTHR43543">
    <property type="entry name" value="MALONIC SEMIALDEHYDE REDUCTASE RUTE-RELATED"/>
    <property type="match status" value="1"/>
</dbReference>
<dbReference type="PANTHER" id="PTHR43543:SF1">
    <property type="entry name" value="MALONIC SEMIALDEHYDE REDUCTASE RUTE-RELATED"/>
    <property type="match status" value="1"/>
</dbReference>
<dbReference type="Pfam" id="PF00881">
    <property type="entry name" value="Nitroreductase"/>
    <property type="match status" value="1"/>
</dbReference>
<dbReference type="SUPFAM" id="SSF55469">
    <property type="entry name" value="FMN-dependent nitroreductase-like"/>
    <property type="match status" value="1"/>
</dbReference>
<comment type="function">
    <text evidence="1">May reduce toxic product malonic semialdehyde to 3-hydroxypropionic acid, which is excreted.</text>
</comment>
<comment type="catalytic activity">
    <reaction evidence="1">
        <text>3-hydroxypropanoate + NADP(+) = 3-oxopropanoate + NADPH + H(+)</text>
        <dbReference type="Rhea" id="RHEA:26438"/>
        <dbReference type="ChEBI" id="CHEBI:15378"/>
        <dbReference type="ChEBI" id="CHEBI:16510"/>
        <dbReference type="ChEBI" id="CHEBI:33190"/>
        <dbReference type="ChEBI" id="CHEBI:57783"/>
        <dbReference type="ChEBI" id="CHEBI:58349"/>
        <dbReference type="EC" id="1.1.1.298"/>
    </reaction>
</comment>
<comment type="cofactor">
    <cofactor evidence="1">
        <name>FMN</name>
        <dbReference type="ChEBI" id="CHEBI:58210"/>
    </cofactor>
</comment>
<comment type="induction">
    <text evidence="1">Up-regulated by the nitrogen regulatory protein C (NtrC also called GlnG) and repressed by RutR.</text>
</comment>
<comment type="similarity">
    <text evidence="1">Belongs to the nitroreductase family. HadB/RutE subfamily.</text>
</comment>
<protein>
    <recommendedName>
        <fullName evidence="1">Probable malonic semialdehyde reductase RutE</fullName>
        <ecNumber evidence="1">1.1.1.298</ecNumber>
    </recommendedName>
</protein>
<gene>
    <name evidence="1" type="primary">rutE</name>
    <name type="ordered locus">EcSMS35_2117</name>
</gene>
<sequence>MNEAVSPGALSTLFTDARTHNGWRETPVSDETLRELYALMKWGPTSANCSPARFVFIRTAEGKERLRPALSSGNLQKTLTAPVTAIVAWDSEFYERLPQLFPHGDARSWFTSSPQLAEETAFRNSSMQAAYLIVACRALGLDTGPMSGFDRQHVDDAFFAGSTLKSNLLINIGYGDSSKLYARLPRLSFEEACGLL</sequence>
<proteinExistence type="inferred from homology"/>